<comment type="catalytic activity">
    <reaction evidence="1">
        <text>tRNA(Phe) + L-phenylalanine + ATP = L-phenylalanyl-tRNA(Phe) + AMP + diphosphate + H(+)</text>
        <dbReference type="Rhea" id="RHEA:19413"/>
        <dbReference type="Rhea" id="RHEA-COMP:9668"/>
        <dbReference type="Rhea" id="RHEA-COMP:9699"/>
        <dbReference type="ChEBI" id="CHEBI:15378"/>
        <dbReference type="ChEBI" id="CHEBI:30616"/>
        <dbReference type="ChEBI" id="CHEBI:33019"/>
        <dbReference type="ChEBI" id="CHEBI:58095"/>
        <dbReference type="ChEBI" id="CHEBI:78442"/>
        <dbReference type="ChEBI" id="CHEBI:78531"/>
        <dbReference type="ChEBI" id="CHEBI:456215"/>
        <dbReference type="EC" id="6.1.1.20"/>
    </reaction>
</comment>
<comment type="cofactor">
    <cofactor evidence="1">
        <name>Mg(2+)</name>
        <dbReference type="ChEBI" id="CHEBI:18420"/>
    </cofactor>
    <text evidence="1">Binds 2 magnesium ions per tetramer.</text>
</comment>
<comment type="subunit">
    <text evidence="1">Tetramer of two alpha and two beta subunits.</text>
</comment>
<comment type="subcellular location">
    <subcellularLocation>
        <location evidence="1">Cytoplasm</location>
    </subcellularLocation>
</comment>
<comment type="similarity">
    <text evidence="1">Belongs to the class-II aminoacyl-tRNA synthetase family. Phe-tRNA synthetase alpha subunit type 1 subfamily.</text>
</comment>
<organism>
    <name type="scientific">Rickettsia typhi (strain ATCC VR-144 / Wilmington)</name>
    <dbReference type="NCBI Taxonomy" id="257363"/>
    <lineage>
        <taxon>Bacteria</taxon>
        <taxon>Pseudomonadati</taxon>
        <taxon>Pseudomonadota</taxon>
        <taxon>Alphaproteobacteria</taxon>
        <taxon>Rickettsiales</taxon>
        <taxon>Rickettsiaceae</taxon>
        <taxon>Rickettsieae</taxon>
        <taxon>Rickettsia</taxon>
        <taxon>typhus group</taxon>
    </lineage>
</organism>
<dbReference type="EC" id="6.1.1.20" evidence="1"/>
<dbReference type="EMBL" id="AE017197">
    <property type="protein sequence ID" value="AAU03880.1"/>
    <property type="molecule type" value="Genomic_DNA"/>
</dbReference>
<dbReference type="RefSeq" id="WP_011190864.1">
    <property type="nucleotide sequence ID" value="NC_006142.1"/>
</dbReference>
<dbReference type="SMR" id="Q68WW2"/>
<dbReference type="KEGG" id="rty:RT0403"/>
<dbReference type="eggNOG" id="COG0016">
    <property type="taxonomic scope" value="Bacteria"/>
</dbReference>
<dbReference type="HOGENOM" id="CLU_025086_0_1_5"/>
<dbReference type="OrthoDB" id="9800719at2"/>
<dbReference type="Proteomes" id="UP000000604">
    <property type="component" value="Chromosome"/>
</dbReference>
<dbReference type="GO" id="GO:0005737">
    <property type="term" value="C:cytoplasm"/>
    <property type="evidence" value="ECO:0007669"/>
    <property type="project" value="UniProtKB-SubCell"/>
</dbReference>
<dbReference type="GO" id="GO:0005524">
    <property type="term" value="F:ATP binding"/>
    <property type="evidence" value="ECO:0007669"/>
    <property type="project" value="UniProtKB-UniRule"/>
</dbReference>
<dbReference type="GO" id="GO:0000287">
    <property type="term" value="F:magnesium ion binding"/>
    <property type="evidence" value="ECO:0007669"/>
    <property type="project" value="UniProtKB-UniRule"/>
</dbReference>
<dbReference type="GO" id="GO:0004826">
    <property type="term" value="F:phenylalanine-tRNA ligase activity"/>
    <property type="evidence" value="ECO:0007669"/>
    <property type="project" value="UniProtKB-UniRule"/>
</dbReference>
<dbReference type="GO" id="GO:0000049">
    <property type="term" value="F:tRNA binding"/>
    <property type="evidence" value="ECO:0007669"/>
    <property type="project" value="InterPro"/>
</dbReference>
<dbReference type="GO" id="GO:0006432">
    <property type="term" value="P:phenylalanyl-tRNA aminoacylation"/>
    <property type="evidence" value="ECO:0007669"/>
    <property type="project" value="UniProtKB-UniRule"/>
</dbReference>
<dbReference type="CDD" id="cd00496">
    <property type="entry name" value="PheRS_alpha_core"/>
    <property type="match status" value="1"/>
</dbReference>
<dbReference type="FunFam" id="3.30.930.10:FF:000003">
    <property type="entry name" value="Phenylalanine--tRNA ligase alpha subunit"/>
    <property type="match status" value="1"/>
</dbReference>
<dbReference type="Gene3D" id="3.30.930.10">
    <property type="entry name" value="Bira Bifunctional Protein, Domain 2"/>
    <property type="match status" value="1"/>
</dbReference>
<dbReference type="HAMAP" id="MF_00281">
    <property type="entry name" value="Phe_tRNA_synth_alpha1"/>
    <property type="match status" value="1"/>
</dbReference>
<dbReference type="InterPro" id="IPR006195">
    <property type="entry name" value="aa-tRNA-synth_II"/>
</dbReference>
<dbReference type="InterPro" id="IPR045864">
    <property type="entry name" value="aa-tRNA-synth_II/BPL/LPL"/>
</dbReference>
<dbReference type="InterPro" id="IPR004529">
    <property type="entry name" value="Phe-tRNA-synth_IIc_asu"/>
</dbReference>
<dbReference type="InterPro" id="IPR004188">
    <property type="entry name" value="Phe-tRNA_ligase_II_N"/>
</dbReference>
<dbReference type="InterPro" id="IPR022911">
    <property type="entry name" value="Phe_tRNA_ligase_alpha1_bac"/>
</dbReference>
<dbReference type="InterPro" id="IPR002319">
    <property type="entry name" value="Phenylalanyl-tRNA_Synthase"/>
</dbReference>
<dbReference type="InterPro" id="IPR010978">
    <property type="entry name" value="tRNA-bd_arm"/>
</dbReference>
<dbReference type="NCBIfam" id="TIGR00468">
    <property type="entry name" value="pheS"/>
    <property type="match status" value="1"/>
</dbReference>
<dbReference type="PANTHER" id="PTHR11538:SF41">
    <property type="entry name" value="PHENYLALANINE--TRNA LIGASE, MITOCHONDRIAL"/>
    <property type="match status" value="1"/>
</dbReference>
<dbReference type="PANTHER" id="PTHR11538">
    <property type="entry name" value="PHENYLALANYL-TRNA SYNTHETASE"/>
    <property type="match status" value="1"/>
</dbReference>
<dbReference type="Pfam" id="PF02912">
    <property type="entry name" value="Phe_tRNA-synt_N"/>
    <property type="match status" value="1"/>
</dbReference>
<dbReference type="Pfam" id="PF01409">
    <property type="entry name" value="tRNA-synt_2d"/>
    <property type="match status" value="1"/>
</dbReference>
<dbReference type="SUPFAM" id="SSF55681">
    <property type="entry name" value="Class II aaRS and biotin synthetases"/>
    <property type="match status" value="1"/>
</dbReference>
<dbReference type="SUPFAM" id="SSF46589">
    <property type="entry name" value="tRNA-binding arm"/>
    <property type="match status" value="1"/>
</dbReference>
<dbReference type="PROSITE" id="PS50862">
    <property type="entry name" value="AA_TRNA_LIGASE_II"/>
    <property type="match status" value="1"/>
</dbReference>
<proteinExistence type="inferred from homology"/>
<name>SYFA_RICTY</name>
<feature type="chain" id="PRO_0000126753" description="Phenylalanine--tRNA ligase alpha subunit">
    <location>
        <begin position="1"/>
        <end position="350"/>
    </location>
</feature>
<feature type="binding site" evidence="1">
    <location>
        <position position="259"/>
    </location>
    <ligand>
        <name>Mg(2+)</name>
        <dbReference type="ChEBI" id="CHEBI:18420"/>
        <note>shared with beta subunit</note>
    </ligand>
</feature>
<accession>Q68WW2</accession>
<sequence>MANIETILKLAEEKILLVHNLKDLQEYKVEFLGKNGIVTSELKKLSSLVNGQERKEFGLKINTLKDKIHNIIKAKVQILEEEELNLKLAADKIDLTIPARRYKQGSIHPITQCMDELIQVFAQFGFTIENGPNIENDFHNFTALNFEYDHPARQMHDTFYLKGRENDKPLLLRTHTSTVQIRAMKNGKPPFRFIAPGRTYRSDSDMTHTPMFHQIEGLVIDKNINMGHLKYVIIKFIRSFFENPNIELRFRPSFFPFTEPSAEVDIRMNKNDKWLEVLGCGMVHPNVLKNVGIDRSEYQGFAFGLGVERFAMLKYNIKDLRRFFEGDIRWLKHYNFESFDIPNLAGGLTK</sequence>
<protein>
    <recommendedName>
        <fullName evidence="1">Phenylalanine--tRNA ligase alpha subunit</fullName>
        <ecNumber evidence="1">6.1.1.20</ecNumber>
    </recommendedName>
    <alternativeName>
        <fullName evidence="1">Phenylalanyl-tRNA synthetase alpha subunit</fullName>
        <shortName evidence="1">PheRS</shortName>
    </alternativeName>
</protein>
<keyword id="KW-0030">Aminoacyl-tRNA synthetase</keyword>
<keyword id="KW-0067">ATP-binding</keyword>
<keyword id="KW-0963">Cytoplasm</keyword>
<keyword id="KW-0436">Ligase</keyword>
<keyword id="KW-0460">Magnesium</keyword>
<keyword id="KW-0479">Metal-binding</keyword>
<keyword id="KW-0547">Nucleotide-binding</keyword>
<keyword id="KW-0648">Protein biosynthesis</keyword>
<reference key="1">
    <citation type="journal article" date="2004" name="J. Bacteriol.">
        <title>Complete genome sequence of Rickettsia typhi and comparison with sequences of other Rickettsiae.</title>
        <authorList>
            <person name="McLeod M.P."/>
            <person name="Qin X."/>
            <person name="Karpathy S.E."/>
            <person name="Gioia J."/>
            <person name="Highlander S.K."/>
            <person name="Fox G.E."/>
            <person name="McNeill T.Z."/>
            <person name="Jiang H."/>
            <person name="Muzny D."/>
            <person name="Jacob L.S."/>
            <person name="Hawes A.C."/>
            <person name="Sodergren E."/>
            <person name="Gill R."/>
            <person name="Hume J."/>
            <person name="Morgan M."/>
            <person name="Fan G."/>
            <person name="Amin A.G."/>
            <person name="Gibbs R.A."/>
            <person name="Hong C."/>
            <person name="Yu X.-J."/>
            <person name="Walker D.H."/>
            <person name="Weinstock G.M."/>
        </authorList>
    </citation>
    <scope>NUCLEOTIDE SEQUENCE [LARGE SCALE GENOMIC DNA]</scope>
    <source>
        <strain>ATCC VR-144 / Wilmington</strain>
    </source>
</reference>
<gene>
    <name evidence="1" type="primary">pheS</name>
    <name type="ordered locus">RT0403</name>
</gene>
<evidence type="ECO:0000255" key="1">
    <source>
        <dbReference type="HAMAP-Rule" id="MF_00281"/>
    </source>
</evidence>